<organism>
    <name type="scientific">Streptococcus pneumoniae (strain ATCC 700669 / Spain 23F-1)</name>
    <dbReference type="NCBI Taxonomy" id="561276"/>
    <lineage>
        <taxon>Bacteria</taxon>
        <taxon>Bacillati</taxon>
        <taxon>Bacillota</taxon>
        <taxon>Bacilli</taxon>
        <taxon>Lactobacillales</taxon>
        <taxon>Streptococcaceae</taxon>
        <taxon>Streptococcus</taxon>
    </lineage>
</organism>
<proteinExistence type="inferred from homology"/>
<name>KAD_STRPJ</name>
<keyword id="KW-0067">ATP-binding</keyword>
<keyword id="KW-0963">Cytoplasm</keyword>
<keyword id="KW-0418">Kinase</keyword>
<keyword id="KW-0545">Nucleotide biosynthesis</keyword>
<keyword id="KW-0547">Nucleotide-binding</keyword>
<keyword id="KW-0808">Transferase</keyword>
<dbReference type="EC" id="2.7.4.3" evidence="1"/>
<dbReference type="EMBL" id="FM211187">
    <property type="protein sequence ID" value="CAR68080.1"/>
    <property type="molecule type" value="Genomic_DNA"/>
</dbReference>
<dbReference type="RefSeq" id="WP_001050431.1">
    <property type="nucleotide sequence ID" value="NC_011900.1"/>
</dbReference>
<dbReference type="SMR" id="B8ZKQ1"/>
<dbReference type="KEGG" id="sne:SPN23F02200"/>
<dbReference type="HOGENOM" id="CLU_032354_1_2_9"/>
<dbReference type="UniPathway" id="UPA00588">
    <property type="reaction ID" value="UER00649"/>
</dbReference>
<dbReference type="GO" id="GO:0005737">
    <property type="term" value="C:cytoplasm"/>
    <property type="evidence" value="ECO:0007669"/>
    <property type="project" value="UniProtKB-SubCell"/>
</dbReference>
<dbReference type="GO" id="GO:0004017">
    <property type="term" value="F:adenylate kinase activity"/>
    <property type="evidence" value="ECO:0007669"/>
    <property type="project" value="UniProtKB-UniRule"/>
</dbReference>
<dbReference type="GO" id="GO:0005524">
    <property type="term" value="F:ATP binding"/>
    <property type="evidence" value="ECO:0007669"/>
    <property type="project" value="UniProtKB-UniRule"/>
</dbReference>
<dbReference type="GO" id="GO:0044209">
    <property type="term" value="P:AMP salvage"/>
    <property type="evidence" value="ECO:0007669"/>
    <property type="project" value="UniProtKB-UniRule"/>
</dbReference>
<dbReference type="CDD" id="cd01428">
    <property type="entry name" value="ADK"/>
    <property type="match status" value="1"/>
</dbReference>
<dbReference type="FunFam" id="3.40.50.300:FF:000106">
    <property type="entry name" value="Adenylate kinase mitochondrial"/>
    <property type="match status" value="1"/>
</dbReference>
<dbReference type="Gene3D" id="3.40.50.300">
    <property type="entry name" value="P-loop containing nucleotide triphosphate hydrolases"/>
    <property type="match status" value="1"/>
</dbReference>
<dbReference type="HAMAP" id="MF_00235">
    <property type="entry name" value="Adenylate_kinase_Adk"/>
    <property type="match status" value="1"/>
</dbReference>
<dbReference type="InterPro" id="IPR006259">
    <property type="entry name" value="Adenyl_kin_sub"/>
</dbReference>
<dbReference type="InterPro" id="IPR000850">
    <property type="entry name" value="Adenylat/UMP-CMP_kin"/>
</dbReference>
<dbReference type="InterPro" id="IPR033690">
    <property type="entry name" value="Adenylat_kinase_CS"/>
</dbReference>
<dbReference type="InterPro" id="IPR027417">
    <property type="entry name" value="P-loop_NTPase"/>
</dbReference>
<dbReference type="NCBIfam" id="TIGR01351">
    <property type="entry name" value="adk"/>
    <property type="match status" value="1"/>
</dbReference>
<dbReference type="NCBIfam" id="NF001380">
    <property type="entry name" value="PRK00279.1-2"/>
    <property type="match status" value="1"/>
</dbReference>
<dbReference type="NCBIfam" id="NF001381">
    <property type="entry name" value="PRK00279.1-3"/>
    <property type="match status" value="1"/>
</dbReference>
<dbReference type="NCBIfam" id="NF001382">
    <property type="entry name" value="PRK00279.1-4"/>
    <property type="match status" value="1"/>
</dbReference>
<dbReference type="NCBIfam" id="NF011100">
    <property type="entry name" value="PRK14527.1"/>
    <property type="match status" value="1"/>
</dbReference>
<dbReference type="PANTHER" id="PTHR23359">
    <property type="entry name" value="NUCLEOTIDE KINASE"/>
    <property type="match status" value="1"/>
</dbReference>
<dbReference type="Pfam" id="PF00406">
    <property type="entry name" value="ADK"/>
    <property type="match status" value="1"/>
</dbReference>
<dbReference type="PRINTS" id="PR00094">
    <property type="entry name" value="ADENYLTKNASE"/>
</dbReference>
<dbReference type="SUPFAM" id="SSF52540">
    <property type="entry name" value="P-loop containing nucleoside triphosphate hydrolases"/>
    <property type="match status" value="1"/>
</dbReference>
<dbReference type="PROSITE" id="PS00113">
    <property type="entry name" value="ADENYLATE_KINASE"/>
    <property type="match status" value="1"/>
</dbReference>
<gene>
    <name evidence="1" type="primary">adk</name>
    <name type="ordered locus">SPN23F02200</name>
</gene>
<sequence length="212" mass="23721">MNLLIMGLPGAGKGTQAAKIVEQFHVAHISTGDMFRAAMANQTEMGVLAKSYIDKGELVPDEVTNGIVKERLSQDDIKETGFLLDGYPRTIEQAHALDKTLAELGIELEGIINIEVNPDSLLERLSGRIIHRVTGETFHKVFNPPVDYKEEDYYQREDDKPETVKRRLDVNIAQGEPIIAHYRAKGLVHDIEGNQDINDVFSDIEKVLTNLK</sequence>
<protein>
    <recommendedName>
        <fullName evidence="1">Adenylate kinase</fullName>
        <shortName evidence="1">AK</shortName>
        <ecNumber evidence="1">2.7.4.3</ecNumber>
    </recommendedName>
    <alternativeName>
        <fullName evidence="1">ATP-AMP transphosphorylase</fullName>
    </alternativeName>
    <alternativeName>
        <fullName evidence="1">ATP:AMP phosphotransferase</fullName>
    </alternativeName>
    <alternativeName>
        <fullName evidence="1">Adenylate monophosphate kinase</fullName>
    </alternativeName>
</protein>
<feature type="chain" id="PRO_1000191169" description="Adenylate kinase">
    <location>
        <begin position="1"/>
        <end position="212"/>
    </location>
</feature>
<feature type="region of interest" description="NMP" evidence="1">
    <location>
        <begin position="30"/>
        <end position="59"/>
    </location>
</feature>
<feature type="region of interest" description="LID" evidence="1">
    <location>
        <begin position="127"/>
        <end position="159"/>
    </location>
</feature>
<feature type="binding site" evidence="1">
    <location>
        <begin position="10"/>
        <end position="15"/>
    </location>
    <ligand>
        <name>ATP</name>
        <dbReference type="ChEBI" id="CHEBI:30616"/>
    </ligand>
</feature>
<feature type="binding site" evidence="1">
    <location>
        <position position="31"/>
    </location>
    <ligand>
        <name>AMP</name>
        <dbReference type="ChEBI" id="CHEBI:456215"/>
    </ligand>
</feature>
<feature type="binding site" evidence="1">
    <location>
        <position position="36"/>
    </location>
    <ligand>
        <name>AMP</name>
        <dbReference type="ChEBI" id="CHEBI:456215"/>
    </ligand>
</feature>
<feature type="binding site" evidence="1">
    <location>
        <begin position="57"/>
        <end position="59"/>
    </location>
    <ligand>
        <name>AMP</name>
        <dbReference type="ChEBI" id="CHEBI:456215"/>
    </ligand>
</feature>
<feature type="binding site" evidence="1">
    <location>
        <begin position="86"/>
        <end position="89"/>
    </location>
    <ligand>
        <name>AMP</name>
        <dbReference type="ChEBI" id="CHEBI:456215"/>
    </ligand>
</feature>
<feature type="binding site" evidence="1">
    <location>
        <position position="93"/>
    </location>
    <ligand>
        <name>AMP</name>
        <dbReference type="ChEBI" id="CHEBI:456215"/>
    </ligand>
</feature>
<feature type="binding site" evidence="1">
    <location>
        <position position="128"/>
    </location>
    <ligand>
        <name>ATP</name>
        <dbReference type="ChEBI" id="CHEBI:30616"/>
    </ligand>
</feature>
<feature type="binding site" evidence="1">
    <location>
        <begin position="137"/>
        <end position="138"/>
    </location>
    <ligand>
        <name>ATP</name>
        <dbReference type="ChEBI" id="CHEBI:30616"/>
    </ligand>
</feature>
<feature type="binding site" evidence="1">
    <location>
        <position position="156"/>
    </location>
    <ligand>
        <name>AMP</name>
        <dbReference type="ChEBI" id="CHEBI:456215"/>
    </ligand>
</feature>
<feature type="binding site" evidence="1">
    <location>
        <position position="167"/>
    </location>
    <ligand>
        <name>AMP</name>
        <dbReference type="ChEBI" id="CHEBI:456215"/>
    </ligand>
</feature>
<feature type="binding site" evidence="1">
    <location>
        <position position="195"/>
    </location>
    <ligand>
        <name>ATP</name>
        <dbReference type="ChEBI" id="CHEBI:30616"/>
    </ligand>
</feature>
<evidence type="ECO:0000255" key="1">
    <source>
        <dbReference type="HAMAP-Rule" id="MF_00235"/>
    </source>
</evidence>
<accession>B8ZKQ1</accession>
<reference key="1">
    <citation type="journal article" date="2009" name="J. Bacteriol.">
        <title>Role of conjugative elements in the evolution of the multidrug-resistant pandemic clone Streptococcus pneumoniae Spain23F ST81.</title>
        <authorList>
            <person name="Croucher N.J."/>
            <person name="Walker D."/>
            <person name="Romero P."/>
            <person name="Lennard N."/>
            <person name="Paterson G.K."/>
            <person name="Bason N.C."/>
            <person name="Mitchell A.M."/>
            <person name="Quail M.A."/>
            <person name="Andrew P.W."/>
            <person name="Parkhill J."/>
            <person name="Bentley S.D."/>
            <person name="Mitchell T.J."/>
        </authorList>
    </citation>
    <scope>NUCLEOTIDE SEQUENCE [LARGE SCALE GENOMIC DNA]</scope>
    <source>
        <strain>ATCC 700669 / Spain 23F-1</strain>
    </source>
</reference>
<comment type="function">
    <text evidence="1">Catalyzes the reversible transfer of the terminal phosphate group between ATP and AMP. Plays an important role in cellular energy homeostasis and in adenine nucleotide metabolism.</text>
</comment>
<comment type="catalytic activity">
    <reaction evidence="1">
        <text>AMP + ATP = 2 ADP</text>
        <dbReference type="Rhea" id="RHEA:12973"/>
        <dbReference type="ChEBI" id="CHEBI:30616"/>
        <dbReference type="ChEBI" id="CHEBI:456215"/>
        <dbReference type="ChEBI" id="CHEBI:456216"/>
        <dbReference type="EC" id="2.7.4.3"/>
    </reaction>
</comment>
<comment type="pathway">
    <text evidence="1">Purine metabolism; AMP biosynthesis via salvage pathway; AMP from ADP: step 1/1.</text>
</comment>
<comment type="subunit">
    <text evidence="1">Monomer.</text>
</comment>
<comment type="subcellular location">
    <subcellularLocation>
        <location evidence="1">Cytoplasm</location>
    </subcellularLocation>
</comment>
<comment type="domain">
    <text evidence="1">Consists of three domains, a large central CORE domain and two small peripheral domains, NMPbind and LID, which undergo movements during catalysis. The LID domain closes over the site of phosphoryl transfer upon ATP binding. Assembling and dissambling the active center during each catalytic cycle provides an effective means to prevent ATP hydrolysis.</text>
</comment>
<comment type="similarity">
    <text evidence="1">Belongs to the adenylate kinase family.</text>
</comment>